<evidence type="ECO:0000250" key="1"/>
<evidence type="ECO:0000255" key="2">
    <source>
        <dbReference type="PROSITE-ProRule" id="PRU00161"/>
    </source>
</evidence>
<evidence type="ECO:0000256" key="3">
    <source>
        <dbReference type="SAM" id="MobiDB-lite"/>
    </source>
</evidence>
<evidence type="ECO:0000305" key="4"/>
<dbReference type="EC" id="5.4.99.-"/>
<dbReference type="EMBL" id="HE600936">
    <property type="protein sequence ID" value="CAP35790.1"/>
    <property type="molecule type" value="Genomic_DNA"/>
</dbReference>
<dbReference type="RefSeq" id="XP_002642321.1">
    <property type="nucleotide sequence ID" value="XM_002642275.1"/>
</dbReference>
<dbReference type="SMR" id="Q60YA8"/>
<dbReference type="FunCoup" id="Q60YA8">
    <property type="interactions" value="2509"/>
</dbReference>
<dbReference type="STRING" id="6238.Q60YA8"/>
<dbReference type="EnsemblMetazoa" id="CBG18316.1">
    <property type="protein sequence ID" value="CBG18316.1"/>
    <property type="gene ID" value="WBGene00037760"/>
</dbReference>
<dbReference type="GeneID" id="8584315"/>
<dbReference type="KEGG" id="cbr:CBG_18316"/>
<dbReference type="CTD" id="8584315"/>
<dbReference type="WormBase" id="CBG18316">
    <property type="protein sequence ID" value="CBP04263"/>
    <property type="gene ID" value="WBGene00037760"/>
</dbReference>
<dbReference type="eggNOG" id="KOG2529">
    <property type="taxonomic scope" value="Eukaryota"/>
</dbReference>
<dbReference type="HOGENOM" id="CLU_032087_3_2_1"/>
<dbReference type="InParanoid" id="Q60YA8"/>
<dbReference type="OMA" id="KYGRTNE"/>
<dbReference type="OrthoDB" id="10250002at2759"/>
<dbReference type="Proteomes" id="UP000008549">
    <property type="component" value="Unassembled WGS sequence"/>
</dbReference>
<dbReference type="GO" id="GO:0031429">
    <property type="term" value="C:box H/ACA snoRNP complex"/>
    <property type="evidence" value="ECO:0000318"/>
    <property type="project" value="GO_Central"/>
</dbReference>
<dbReference type="GO" id="GO:0009982">
    <property type="term" value="F:pseudouridine synthase activity"/>
    <property type="evidence" value="ECO:0000318"/>
    <property type="project" value="GO_Central"/>
</dbReference>
<dbReference type="GO" id="GO:0003723">
    <property type="term" value="F:RNA binding"/>
    <property type="evidence" value="ECO:0007669"/>
    <property type="project" value="UniProtKB-KW"/>
</dbReference>
<dbReference type="GO" id="GO:0000495">
    <property type="term" value="P:box H/ACA sno(s)RNA 3'-end processing"/>
    <property type="evidence" value="ECO:0000318"/>
    <property type="project" value="GO_Central"/>
</dbReference>
<dbReference type="GO" id="GO:1990481">
    <property type="term" value="P:mRNA pseudouridine synthesis"/>
    <property type="evidence" value="ECO:0000318"/>
    <property type="project" value="GO_Central"/>
</dbReference>
<dbReference type="GO" id="GO:0031118">
    <property type="term" value="P:rRNA pseudouridine synthesis"/>
    <property type="evidence" value="ECO:0000318"/>
    <property type="project" value="GO_Central"/>
</dbReference>
<dbReference type="GO" id="GO:0031120">
    <property type="term" value="P:snRNA pseudouridine synthesis"/>
    <property type="evidence" value="ECO:0000318"/>
    <property type="project" value="GO_Central"/>
</dbReference>
<dbReference type="CDD" id="cd02572">
    <property type="entry name" value="PseudoU_synth_hDyskerin"/>
    <property type="match status" value="1"/>
</dbReference>
<dbReference type="CDD" id="cd21148">
    <property type="entry name" value="PUA_Cbf5"/>
    <property type="match status" value="1"/>
</dbReference>
<dbReference type="FunFam" id="3.30.2350.10:FF:000001">
    <property type="entry name" value="H/ACA ribonucleoprotein complex subunit CBF5"/>
    <property type="match status" value="1"/>
</dbReference>
<dbReference type="Gene3D" id="3.30.2350.10">
    <property type="entry name" value="Pseudouridine synthase"/>
    <property type="match status" value="1"/>
</dbReference>
<dbReference type="Gene3D" id="2.30.130.10">
    <property type="entry name" value="PUA domain"/>
    <property type="match status" value="1"/>
</dbReference>
<dbReference type="InterPro" id="IPR012960">
    <property type="entry name" value="Dyskerin-like"/>
</dbReference>
<dbReference type="InterPro" id="IPR020103">
    <property type="entry name" value="PsdUridine_synth_cat_dom_sf"/>
</dbReference>
<dbReference type="InterPro" id="IPR002501">
    <property type="entry name" value="PsdUridine_synth_N"/>
</dbReference>
<dbReference type="InterPro" id="IPR002478">
    <property type="entry name" value="PUA"/>
</dbReference>
<dbReference type="InterPro" id="IPR015947">
    <property type="entry name" value="PUA-like_sf"/>
</dbReference>
<dbReference type="InterPro" id="IPR036974">
    <property type="entry name" value="PUA_sf"/>
</dbReference>
<dbReference type="InterPro" id="IPR004802">
    <property type="entry name" value="tRNA_PsdUridine_synth_B_fam"/>
</dbReference>
<dbReference type="InterPro" id="IPR032819">
    <property type="entry name" value="TruB_C"/>
</dbReference>
<dbReference type="InterPro" id="IPR004521">
    <property type="entry name" value="Uncharacterised_CHP00451"/>
</dbReference>
<dbReference type="NCBIfam" id="TIGR00425">
    <property type="entry name" value="CBF5"/>
    <property type="match status" value="1"/>
</dbReference>
<dbReference type="NCBIfam" id="NF003280">
    <property type="entry name" value="PRK04270.1"/>
    <property type="match status" value="1"/>
</dbReference>
<dbReference type="NCBIfam" id="TIGR00451">
    <property type="entry name" value="unchar_dom_2"/>
    <property type="match status" value="1"/>
</dbReference>
<dbReference type="PANTHER" id="PTHR23127">
    <property type="entry name" value="CENTROMERE/MICROTUBULE BINDING PROTEIN CBF5"/>
    <property type="match status" value="1"/>
</dbReference>
<dbReference type="PANTHER" id="PTHR23127:SF0">
    <property type="entry name" value="H_ACA RIBONUCLEOPROTEIN COMPLEX SUBUNIT DKC1"/>
    <property type="match status" value="1"/>
</dbReference>
<dbReference type="Pfam" id="PF08068">
    <property type="entry name" value="DKCLD"/>
    <property type="match status" value="1"/>
</dbReference>
<dbReference type="Pfam" id="PF01472">
    <property type="entry name" value="PUA"/>
    <property type="match status" value="1"/>
</dbReference>
<dbReference type="Pfam" id="PF16198">
    <property type="entry name" value="TruB_C_2"/>
    <property type="match status" value="1"/>
</dbReference>
<dbReference type="Pfam" id="PF01509">
    <property type="entry name" value="TruB_N"/>
    <property type="match status" value="1"/>
</dbReference>
<dbReference type="SMART" id="SM01136">
    <property type="entry name" value="DKCLD"/>
    <property type="match status" value="1"/>
</dbReference>
<dbReference type="SMART" id="SM00359">
    <property type="entry name" value="PUA"/>
    <property type="match status" value="1"/>
</dbReference>
<dbReference type="SUPFAM" id="SSF55120">
    <property type="entry name" value="Pseudouridine synthase"/>
    <property type="match status" value="1"/>
</dbReference>
<dbReference type="SUPFAM" id="SSF88697">
    <property type="entry name" value="PUA domain-like"/>
    <property type="match status" value="1"/>
</dbReference>
<dbReference type="PROSITE" id="PS50890">
    <property type="entry name" value="PUA"/>
    <property type="match status" value="1"/>
</dbReference>
<keyword id="KW-0175">Coiled coil</keyword>
<keyword id="KW-0413">Isomerase</keyword>
<keyword id="KW-0539">Nucleus</keyword>
<keyword id="KW-1185">Reference proteome</keyword>
<keyword id="KW-0687">Ribonucleoprotein</keyword>
<keyword id="KW-0690">Ribosome biogenesis</keyword>
<keyword id="KW-0694">RNA-binding</keyword>
<keyword id="KW-0698">rRNA processing</keyword>
<organism>
    <name type="scientific">Caenorhabditis briggsae</name>
    <dbReference type="NCBI Taxonomy" id="6238"/>
    <lineage>
        <taxon>Eukaryota</taxon>
        <taxon>Metazoa</taxon>
        <taxon>Ecdysozoa</taxon>
        <taxon>Nematoda</taxon>
        <taxon>Chromadorea</taxon>
        <taxon>Rhabditida</taxon>
        <taxon>Rhabditina</taxon>
        <taxon>Rhabditomorpha</taxon>
        <taxon>Rhabditoidea</taxon>
        <taxon>Rhabditidae</taxon>
        <taxon>Peloderinae</taxon>
        <taxon>Caenorhabditis</taxon>
    </lineage>
</organism>
<reference key="1">
    <citation type="journal article" date="2003" name="PLoS Biol.">
        <title>The genome sequence of Caenorhabditis briggsae: a platform for comparative genomics.</title>
        <authorList>
            <person name="Stein L.D."/>
            <person name="Bao Z."/>
            <person name="Blasiar D."/>
            <person name="Blumenthal T."/>
            <person name="Brent M.R."/>
            <person name="Chen N."/>
            <person name="Chinwalla A."/>
            <person name="Clarke L."/>
            <person name="Clee C."/>
            <person name="Coghlan A."/>
            <person name="Coulson A."/>
            <person name="D'Eustachio P."/>
            <person name="Fitch D.H.A."/>
            <person name="Fulton L.A."/>
            <person name="Fulton R.E."/>
            <person name="Griffiths-Jones S."/>
            <person name="Harris T.W."/>
            <person name="Hillier L.W."/>
            <person name="Kamath R."/>
            <person name="Kuwabara P.E."/>
            <person name="Mardis E.R."/>
            <person name="Marra M.A."/>
            <person name="Miner T.L."/>
            <person name="Minx P."/>
            <person name="Mullikin J.C."/>
            <person name="Plumb R.W."/>
            <person name="Rogers J."/>
            <person name="Schein J.E."/>
            <person name="Sohrmann M."/>
            <person name="Spieth J."/>
            <person name="Stajich J.E."/>
            <person name="Wei C."/>
            <person name="Willey D."/>
            <person name="Wilson R.K."/>
            <person name="Durbin R.M."/>
            <person name="Waterston R.H."/>
        </authorList>
    </citation>
    <scope>NUCLEOTIDE SEQUENCE [LARGE SCALE GENOMIC DNA]</scope>
    <source>
        <strain>AF16</strain>
    </source>
</reference>
<protein>
    <recommendedName>
        <fullName>Putative H/ACA ribonucleoprotein complex subunit 4</fullName>
        <ecNumber>5.4.99.-</ecNumber>
    </recommendedName>
</protein>
<sequence>MGKKDKRSKLEGDELAEAQQKGSFQLPSSNETAKLDASQWPLLLKNYDKLNVRTNHYTPHVEGVSPLKRDIKNYISSGFFNLDKPSNPSSHEVVSWIKRILRCEKTGHSGTLDPKVSGCLIVCIDRTTRLAKSQQGAGKEYICIFKLHEEVEDERKVKQALEKLTGALFQRPPLISAVKRQLRIRTVYENKFIEYDPAQQMGIFNCICESGTYVRTICVHLGLILGCGGQMQELRRNRSGICDENENMVTMHDVLDAQYMLDTQKDESYMRHIVRPLEALLTQHKRVVVKDSCVNAICYGAKILIPGILRYDDDIEVGKEIVIMTTKGEAICIAIAQMSTSTIASVDHGIVAKSKRVIMERDVYGRKWGLGPVASKKKQMVKDGLLDKFGKPNITTPKSWAKEYVQTDKVKKEQEDKEDEEEEEAPKKKSKKAAKKEVSSSSDSE</sequence>
<feature type="chain" id="PRO_0000121987" description="Putative H/ACA ribonucleoprotein complex subunit 4">
    <location>
        <begin position="1"/>
        <end position="445"/>
    </location>
</feature>
<feature type="domain" description="PUA" evidence="2">
    <location>
        <begin position="284"/>
        <end position="359"/>
    </location>
</feature>
<feature type="region of interest" description="Disordered" evidence="3">
    <location>
        <begin position="1"/>
        <end position="32"/>
    </location>
</feature>
<feature type="region of interest" description="Disordered" evidence="3">
    <location>
        <begin position="407"/>
        <end position="445"/>
    </location>
</feature>
<feature type="compositionally biased region" description="Polar residues" evidence="3">
    <location>
        <begin position="20"/>
        <end position="32"/>
    </location>
</feature>
<feature type="active site" description="Nucleophile" evidence="1">
    <location>
        <position position="113"/>
    </location>
</feature>
<comment type="function">
    <text evidence="1">Plays a central role in ribosomal RNA processing. Probable catalytic subunit of H/ACA small nucleolar ribonucleoprotein (H/ACA snoRNP) complex, which catalyzes pseudouridylation of rRNA. This involves the isomerization of uridine such that the ribose is subsequently attached to C5, instead of the normal N1. Pseudouridine ('psi') residues may serve to stabilize the conformation of rRNAs (By similarity).</text>
</comment>
<comment type="catalytic activity">
    <reaction>
        <text>a uridine in RNA = a pseudouridine in RNA</text>
        <dbReference type="Rhea" id="RHEA:48348"/>
        <dbReference type="Rhea" id="RHEA-COMP:12068"/>
        <dbReference type="Rhea" id="RHEA-COMP:12069"/>
        <dbReference type="ChEBI" id="CHEBI:65314"/>
        <dbReference type="ChEBI" id="CHEBI:65315"/>
    </reaction>
</comment>
<comment type="subunit">
    <text evidence="1">Component of the small nucleolar ribonucleoprotein particle containing H/ACA-type snoRNAs (H/ACA snoRNPs).</text>
</comment>
<comment type="subcellular location">
    <subcellularLocation>
        <location evidence="1">Nucleus</location>
        <location evidence="1">Nucleolus</location>
    </subcellularLocation>
</comment>
<comment type="similarity">
    <text evidence="4">Belongs to the pseudouridine synthase TruB family.</text>
</comment>
<proteinExistence type="inferred from homology"/>
<gene>
    <name type="ORF">CBG18316</name>
</gene>
<name>DKC1_CAEBR</name>
<accession>Q60YA8</accession>
<accession>A8XSE8</accession>